<proteinExistence type="evidence at protein level"/>
<name>FABP1_DORPE</name>
<organism evidence="10">
    <name type="scientific">Doryteuthis pealeii</name>
    <name type="common">Longfin inshore squid</name>
    <name type="synonym">Loligo pealeii</name>
    <dbReference type="NCBI Taxonomy" id="1051067"/>
    <lineage>
        <taxon>Eukaryota</taxon>
        <taxon>Metazoa</taxon>
        <taxon>Spiralia</taxon>
        <taxon>Lophotrochozoa</taxon>
        <taxon>Mollusca</taxon>
        <taxon>Cephalopoda</taxon>
        <taxon>Coleoidea</taxon>
        <taxon>Decapodiformes</taxon>
        <taxon>Myopsida</taxon>
        <taxon>Loliginidae</taxon>
        <taxon>Doryteuthis</taxon>
    </lineage>
</organism>
<reference evidence="10" key="1">
    <citation type="journal article" date="2009" name="Biochim. Biophys. Acta">
        <title>A novel lipid binding protein is a factor required for MgATP stimulation of the squid nerve Na+/Ca2+ exchanger.</title>
        <authorList>
            <person name="Berberian G."/>
            <person name="Bollo M."/>
            <person name="Montich G."/>
            <person name="Roberts G."/>
            <person name="Degiorgis J.A."/>
            <person name="Dipolo R."/>
            <person name="Beauge L."/>
        </authorList>
    </citation>
    <scope>NUCLEOTIDE SEQUENCE [MRNA]</scope>
    <scope>FUNCTION</scope>
    <scope>SUBCELLULAR LOCATION</scope>
    <scope>TISSUE SPECIFICITY</scope>
    <scope>PHOSPHORYLATION</scope>
    <source>
        <tissue evidence="10">Cervicothoracic ganglion</tissue>
    </source>
</reference>
<reference evidence="9" key="2">
    <citation type="journal article" date="2009" name="Cell Calcium">
        <title>Squid nerve Na+/Ca2+ exchanger expressed in Saccharomyces cerevisiae: up-regulation by a phosphorylated cytosolic protein (ReP1-NCXSQ) is identical to that of native exchanger in situ.</title>
        <authorList>
            <person name="Raimunda D."/>
            <person name="Bollo M."/>
            <person name="Beauge L."/>
            <person name="Berberian G."/>
        </authorList>
    </citation>
    <scope>FUNCTION</scope>
    <scope>INTERACTION WITH NCXSQ1</scope>
    <scope>PHOSPHORYLATION</scope>
</reference>
<reference evidence="9" key="3">
    <citation type="journal article" date="2013" name="Adv. Exp. Med. Biol.">
        <title>Metabolic regulation of the squid nerve Na(+)/Ca (2+) exchanger: recent developments.</title>
        <authorList>
            <person name="Beauge L."/>
            <person name="Dipolo R."/>
            <person name="Bollo M."/>
            <person name="Cousido A."/>
            <person name="Berberian G."/>
            <person name="Podjarny A."/>
        </authorList>
    </citation>
    <scope>FUNCTION</scope>
    <scope>PHOSPHORYLATION</scope>
    <scope>MUTAGENESIS OF TYR-20; PHE-58; SER-99; ARG-126 AND TYR-128</scope>
</reference>
<reference evidence="9" key="4">
    <citation type="journal article" date="2014" name="Biochim. Biophys. Acta">
        <title>Interactions of the fatty acid-binding protein ReP1-NCXSQ with lipid membranes. Influence of the membrane electric field on binding and orientation.</title>
        <authorList>
            <person name="Galassi V.V."/>
            <person name="Villarreal M.A."/>
            <person name="Posada V."/>
            <person name="Montich G.G."/>
        </authorList>
    </citation>
    <scope>SUBCELLULAR LOCATION</scope>
</reference>
<reference evidence="11 12" key="5">
    <citation type="journal article" date="2012" name="Acta Crystallogr. D">
        <title>Structural and functional studies of ReP1-NCXSQ, a protein regulating the squid nerve Na+/Ca2+ exchanger.</title>
        <authorList>
            <person name="Cousido-Siah A."/>
            <person name="Ayoub D."/>
            <person name="Berberian G."/>
            <person name="Bollo M."/>
            <person name="Van Dorsselaer A."/>
            <person name="Debaene F."/>
            <person name="DiPolo R."/>
            <person name="Petrova T."/>
            <person name="Schulze-Briese C."/>
            <person name="Olieric V."/>
            <person name="Esteves A."/>
            <person name="Mitschler A."/>
            <person name="Sanglier-Cianferani S."/>
            <person name="Beauge L."/>
            <person name="Podjarny A."/>
        </authorList>
    </citation>
    <scope>X-RAY CRYSTALLOGRAPHY (1.28 ANGSTROMS) OF 2-132 IN COMPLEX WITH PALMITOLEIC ACID</scope>
    <scope>FUNCTION</scope>
    <scope>DOMAIN</scope>
    <scope>MUTAGENESIS OF TYR-128</scope>
</reference>
<evidence type="ECO:0000255" key="1"/>
<evidence type="ECO:0000255" key="2">
    <source>
        <dbReference type="RuleBase" id="RU003696"/>
    </source>
</evidence>
<evidence type="ECO:0000269" key="3">
    <source>
    </source>
</evidence>
<evidence type="ECO:0000269" key="4">
    <source>
    </source>
</evidence>
<evidence type="ECO:0000269" key="5">
    <source>
    </source>
</evidence>
<evidence type="ECO:0000269" key="6">
    <source>
    </source>
</evidence>
<evidence type="ECO:0000269" key="7">
    <source>
    </source>
</evidence>
<evidence type="ECO:0000303" key="8">
    <source>
    </source>
</evidence>
<evidence type="ECO:0000305" key="9"/>
<evidence type="ECO:0000312" key="10">
    <source>
        <dbReference type="EMBL" id="ACL80558.1"/>
    </source>
</evidence>
<evidence type="ECO:0007744" key="11">
    <source>
        <dbReference type="PDB" id="3PP6"/>
    </source>
</evidence>
<evidence type="ECO:0007744" key="12">
    <source>
        <dbReference type="PDB" id="3PPT"/>
    </source>
</evidence>
<evidence type="ECO:0007829" key="13">
    <source>
        <dbReference type="PDB" id="3PPT"/>
    </source>
</evidence>
<comment type="function">
    <text evidence="3 4 5">Binds and may transport fatty acids such as palmitoleate (PubMed:22948910). Also binds poly-phosphoinositides including phosphatidylinositol 4-phosphate (PtdIns(4)P), phosphatidylinositol 4,5-bisphosphate (PtdIns(4,5)P2) and phosphatidylinositol 3,4,5-trisphosphate (PtdIns(3,4,5)P3), and phosphatidic acid (PubMed:19168028). When phosphorylated, stimulates the activity of optic nerve Na(+)/Ca(2+) exchanger (PubMed:19168028, PubMed:19386360, PubMed:22948910).</text>
</comment>
<comment type="subunit">
    <text evidence="4">Interacts with Na(+)/Ca(2+) exchanger NCXSQ1; ReP1-NCXSQ phosphorylation does not affect the interaction.</text>
</comment>
<comment type="subcellular location">
    <subcellularLocation>
        <location evidence="3">Cytoplasm</location>
    </subcellularLocation>
    <subcellularLocation>
        <location evidence="7">Membrane</location>
        <topology evidence="7">Peripheral membrane protein</topology>
    </subcellularLocation>
</comment>
<comment type="tissue specificity">
    <text evidence="3">Expressed in the optic nerve (at protein level).</text>
</comment>
<comment type="domain">
    <text evidence="5">Forms a beta-barrel structure that accommodates hydrophobic ligands in its interior.</text>
</comment>
<comment type="PTM">
    <text evidence="3 4 5 6">Phosphorylated (PubMed:19168028, PubMed:19386360, PubMed:23224877). Phosphorylation may result in the release of the bound fatty acid (PubMed:22948910).</text>
</comment>
<comment type="similarity">
    <text evidence="1 2">Belongs to the calycin superfamily. Fatty-acid binding protein (FABP) family.</text>
</comment>
<dbReference type="EMBL" id="EU981897">
    <property type="protein sequence ID" value="ACL80558.1"/>
    <property type="molecule type" value="mRNA"/>
</dbReference>
<dbReference type="PDB" id="3PP6">
    <property type="method" value="X-ray"/>
    <property type="resolution" value="1.90 A"/>
    <property type="chains" value="A/B/C=2-132"/>
</dbReference>
<dbReference type="PDB" id="3PPT">
    <property type="method" value="X-ray"/>
    <property type="resolution" value="1.28 A"/>
    <property type="chains" value="A=2-132"/>
</dbReference>
<dbReference type="PDBsum" id="3PP6"/>
<dbReference type="PDBsum" id="3PPT"/>
<dbReference type="SMR" id="C4N147"/>
<dbReference type="EvolutionaryTrace" id="C4N147"/>
<dbReference type="GO" id="GO:0005737">
    <property type="term" value="C:cytoplasm"/>
    <property type="evidence" value="ECO:0007669"/>
    <property type="project" value="UniProtKB-SubCell"/>
</dbReference>
<dbReference type="GO" id="GO:0016020">
    <property type="term" value="C:membrane"/>
    <property type="evidence" value="ECO:0007669"/>
    <property type="project" value="UniProtKB-SubCell"/>
</dbReference>
<dbReference type="GO" id="GO:0008289">
    <property type="term" value="F:lipid binding"/>
    <property type="evidence" value="ECO:0007669"/>
    <property type="project" value="UniProtKB-KW"/>
</dbReference>
<dbReference type="CDD" id="cd19449">
    <property type="entry name" value="ReP1-NCXSQ-like"/>
    <property type="match status" value="1"/>
</dbReference>
<dbReference type="FunFam" id="2.40.128.20:FF:000001">
    <property type="entry name" value="Fatty acid-binding protein, adipocyte"/>
    <property type="match status" value="1"/>
</dbReference>
<dbReference type="Gene3D" id="2.40.128.20">
    <property type="match status" value="1"/>
</dbReference>
<dbReference type="InterPro" id="IPR012674">
    <property type="entry name" value="Calycin"/>
</dbReference>
<dbReference type="InterPro" id="IPR000463">
    <property type="entry name" value="Fatty_acid-bd"/>
</dbReference>
<dbReference type="InterPro" id="IPR031259">
    <property type="entry name" value="ILBP"/>
</dbReference>
<dbReference type="InterPro" id="IPR000566">
    <property type="entry name" value="Lipocln_cytosolic_FA-bd_dom"/>
</dbReference>
<dbReference type="PANTHER" id="PTHR11955">
    <property type="entry name" value="FATTY ACID BINDING PROTEIN"/>
    <property type="match status" value="1"/>
</dbReference>
<dbReference type="Pfam" id="PF00061">
    <property type="entry name" value="Lipocalin"/>
    <property type="match status" value="1"/>
</dbReference>
<dbReference type="PRINTS" id="PR00178">
    <property type="entry name" value="FATTYACIDBP"/>
</dbReference>
<dbReference type="SUPFAM" id="SSF50814">
    <property type="entry name" value="Lipocalins"/>
    <property type="match status" value="1"/>
</dbReference>
<dbReference type="PROSITE" id="PS00214">
    <property type="entry name" value="FABP"/>
    <property type="match status" value="1"/>
</dbReference>
<feature type="chain" id="PRO_0000445547" description="Sodium/calcium exchanger regulatory protein 1">
    <location>
        <begin position="1"/>
        <end position="132"/>
    </location>
</feature>
<feature type="binding site" evidence="5 12">
    <location>
        <position position="126"/>
    </location>
    <ligand>
        <name>(9Z)-hexadecenoate</name>
        <dbReference type="ChEBI" id="CHEBI:32372"/>
    </ligand>
</feature>
<feature type="binding site" evidence="5 12">
    <location>
        <position position="128"/>
    </location>
    <ligand>
        <name>(9Z)-hexadecenoate</name>
        <dbReference type="ChEBI" id="CHEBI:32372"/>
    </ligand>
</feature>
<feature type="mutagenesis site" description="Does not affect activation of Na(+)/Ca(2+) exchanger and ReP1-NCXSQ phosphorylation." evidence="6">
    <original>Y</original>
    <variation>F</variation>
    <location>
        <position position="20"/>
    </location>
</feature>
<feature type="mutagenesis site" description="Does not affect activation of Na(+)/Ca(2+) exchanger and ReP1-NCXSQ phosphorylation." evidence="6">
    <original>F</original>
    <variation>V</variation>
    <location>
        <position position="58"/>
    </location>
</feature>
<feature type="mutagenesis site" description="Does not affect activation of Na(+)/Ca(2+) exchanger and ReP1-NCXSQ phosphorylation." evidence="6">
    <original>S</original>
    <variation>A</variation>
    <location>
        <position position="99"/>
    </location>
</feature>
<feature type="mutagenesis site" description="Does not affect activation of Na(+)/Ca(2+) exchanger and ReP1-NCXSQ phosphorylation. Fails to activate Na(+)/Ca(2+) exchanger and does not affect ReP1-NCXSQ phosphorylation; when associated with F-128." evidence="6">
    <original>R</original>
    <variation>A</variation>
    <location>
        <position position="126"/>
    </location>
</feature>
<feature type="mutagenesis site" description="Loss of binding to fatty acid. Fails to activate Na(+)/Ca(2+) exchanger. Does not affect ReP1-NCXSQ phosphorylation. Fails to activate Na(+)/Ca(2+) exchanger and does not affect ReP1-NCXSQ phosphorylation; when associated with A-126." evidence="5 6">
    <original>Y</original>
    <variation>F</variation>
    <location>
        <position position="128"/>
    </location>
</feature>
<feature type="helix" evidence="13">
    <location>
        <begin position="3"/>
        <end position="5"/>
    </location>
</feature>
<feature type="strand" evidence="13">
    <location>
        <begin position="7"/>
        <end position="16"/>
    </location>
</feature>
<feature type="helix" evidence="13">
    <location>
        <begin position="17"/>
        <end position="24"/>
    </location>
</feature>
<feature type="helix" evidence="13">
    <location>
        <begin position="28"/>
        <end position="36"/>
    </location>
</feature>
<feature type="strand" evidence="13">
    <location>
        <begin position="40"/>
        <end position="46"/>
    </location>
</feature>
<feature type="strand" evidence="13">
    <location>
        <begin position="49"/>
        <end position="55"/>
    </location>
</feature>
<feature type="strand" evidence="13">
    <location>
        <begin position="60"/>
        <end position="66"/>
    </location>
</feature>
<feature type="strand" evidence="13">
    <location>
        <begin position="71"/>
        <end position="74"/>
    </location>
</feature>
<feature type="strand" evidence="13">
    <location>
        <begin position="80"/>
        <end position="88"/>
    </location>
</feature>
<feature type="strand" evidence="13">
    <location>
        <begin position="91"/>
        <end position="100"/>
    </location>
</feature>
<feature type="strand" evidence="13">
    <location>
        <begin position="102"/>
        <end position="109"/>
    </location>
</feature>
<feature type="strand" evidence="13">
    <location>
        <begin position="112"/>
        <end position="119"/>
    </location>
</feature>
<feature type="strand" evidence="13">
    <location>
        <begin position="122"/>
        <end position="131"/>
    </location>
</feature>
<keyword id="KW-0002">3D-structure</keyword>
<keyword id="KW-0963">Cytoplasm</keyword>
<keyword id="KW-0446">Lipid-binding</keyword>
<keyword id="KW-0472">Membrane</keyword>
<keyword id="KW-0597">Phosphoprotein</keyword>
<keyword id="KW-0813">Transport</keyword>
<sequence length="132" mass="14664">MAADLAGKWILESSENFDDYMKAVGVGMVMRKMANAATPTQEIKIDGDSWSIKTSTTFKTTDISFTIGQEFDETTGDGRKIKTTCKIDGNAMIQDQKGSPDSILSREVKDGKMHMILKVNDVVCTRIYKRVD</sequence>
<accession>C4N147</accession>
<protein>
    <recommendedName>
        <fullName evidence="8">Sodium/calcium exchanger regulatory protein 1</fullName>
        <shortName evidence="8">ReP1-NCXSQ</shortName>
    </recommendedName>
    <alternativeName>
        <fullName evidence="9">Fatty acid-binding protein 1</fullName>
    </alternativeName>
    <alternativeName>
        <fullName evidence="8">Na(+)/Ca(2+) exchanger regulatory protein 1</fullName>
    </alternativeName>
</protein>